<sequence length="197" mass="22105">MKRQLALGTNNLNKVKEVSSILMELGIQILTPKDLKVSFNPEETGSTFKENALIKAKELFYLTKIPSIADDSGICVSALKDEPGVYSARFGGPELNDEGRALLLLEKLKGNQNRKAYYACAIAYVDESTEQSFEGRCEGLISEEYDRIGIYGFGYDPIFIFPPLQKPFSQIQEETKNSVSHRKKALDELLKFLKTKP</sequence>
<protein>
    <recommendedName>
        <fullName evidence="1">dITP/XTP pyrophosphatase</fullName>
        <ecNumber evidence="1">3.6.1.66</ecNumber>
    </recommendedName>
    <alternativeName>
        <fullName evidence="1">Non-canonical purine NTP pyrophosphatase</fullName>
    </alternativeName>
    <alternativeName>
        <fullName evidence="1">Non-standard purine NTP pyrophosphatase</fullName>
    </alternativeName>
    <alternativeName>
        <fullName evidence="1">Nucleoside-triphosphate diphosphatase</fullName>
    </alternativeName>
    <alternativeName>
        <fullName evidence="1">Nucleoside-triphosphate pyrophosphatase</fullName>
        <shortName evidence="1">NTPase</shortName>
    </alternativeName>
</protein>
<name>IXTPA_LEPIN</name>
<proteinExistence type="inferred from homology"/>
<gene>
    <name type="ordered locus">LA_3666</name>
</gene>
<reference key="1">
    <citation type="journal article" date="2003" name="Nature">
        <title>Unique physiological and pathogenic features of Leptospira interrogans revealed by whole-genome sequencing.</title>
        <authorList>
            <person name="Ren S.-X."/>
            <person name="Fu G."/>
            <person name="Jiang X.-G."/>
            <person name="Zeng R."/>
            <person name="Miao Y.-G."/>
            <person name="Xu H."/>
            <person name="Zhang Y.-X."/>
            <person name="Xiong H."/>
            <person name="Lu G."/>
            <person name="Lu L.-F."/>
            <person name="Jiang H.-Q."/>
            <person name="Jia J."/>
            <person name="Tu Y.-F."/>
            <person name="Jiang J.-X."/>
            <person name="Gu W.-Y."/>
            <person name="Zhang Y.-Q."/>
            <person name="Cai Z."/>
            <person name="Sheng H.-H."/>
            <person name="Yin H.-F."/>
            <person name="Zhang Y."/>
            <person name="Zhu G.-F."/>
            <person name="Wan M."/>
            <person name="Huang H.-L."/>
            <person name="Qian Z."/>
            <person name="Wang S.-Y."/>
            <person name="Ma W."/>
            <person name="Yao Z.-J."/>
            <person name="Shen Y."/>
            <person name="Qiang B.-Q."/>
            <person name="Xia Q.-C."/>
            <person name="Guo X.-K."/>
            <person name="Danchin A."/>
            <person name="Saint Girons I."/>
            <person name="Somerville R.L."/>
            <person name="Wen Y.-M."/>
            <person name="Shi M.-H."/>
            <person name="Chen Z."/>
            <person name="Xu J.-G."/>
            <person name="Zhao G.-P."/>
        </authorList>
    </citation>
    <scope>NUCLEOTIDE SEQUENCE [LARGE SCALE GENOMIC DNA]</scope>
    <source>
        <strain>56601</strain>
    </source>
</reference>
<comment type="function">
    <text evidence="1">Pyrophosphatase that catalyzes the hydrolysis of nucleoside triphosphates to their monophosphate derivatives, with a high preference for the non-canonical purine nucleotides XTP (xanthosine triphosphate), dITP (deoxyinosine triphosphate) and ITP. Seems to function as a house-cleaning enzyme that removes non-canonical purine nucleotides from the nucleotide pool, thus preventing their incorporation into DNA/RNA and avoiding chromosomal lesions.</text>
</comment>
<comment type="catalytic activity">
    <reaction evidence="1">
        <text>XTP + H2O = XMP + diphosphate + H(+)</text>
        <dbReference type="Rhea" id="RHEA:28610"/>
        <dbReference type="ChEBI" id="CHEBI:15377"/>
        <dbReference type="ChEBI" id="CHEBI:15378"/>
        <dbReference type="ChEBI" id="CHEBI:33019"/>
        <dbReference type="ChEBI" id="CHEBI:57464"/>
        <dbReference type="ChEBI" id="CHEBI:61314"/>
        <dbReference type="EC" id="3.6.1.66"/>
    </reaction>
</comment>
<comment type="catalytic activity">
    <reaction evidence="1">
        <text>dITP + H2O = dIMP + diphosphate + H(+)</text>
        <dbReference type="Rhea" id="RHEA:28342"/>
        <dbReference type="ChEBI" id="CHEBI:15377"/>
        <dbReference type="ChEBI" id="CHEBI:15378"/>
        <dbReference type="ChEBI" id="CHEBI:33019"/>
        <dbReference type="ChEBI" id="CHEBI:61194"/>
        <dbReference type="ChEBI" id="CHEBI:61382"/>
        <dbReference type="EC" id="3.6.1.66"/>
    </reaction>
</comment>
<comment type="catalytic activity">
    <reaction evidence="1">
        <text>ITP + H2O = IMP + diphosphate + H(+)</text>
        <dbReference type="Rhea" id="RHEA:29399"/>
        <dbReference type="ChEBI" id="CHEBI:15377"/>
        <dbReference type="ChEBI" id="CHEBI:15378"/>
        <dbReference type="ChEBI" id="CHEBI:33019"/>
        <dbReference type="ChEBI" id="CHEBI:58053"/>
        <dbReference type="ChEBI" id="CHEBI:61402"/>
        <dbReference type="EC" id="3.6.1.66"/>
    </reaction>
</comment>
<comment type="cofactor">
    <cofactor evidence="1">
        <name>Mg(2+)</name>
        <dbReference type="ChEBI" id="CHEBI:18420"/>
    </cofactor>
    <text evidence="1">Binds 1 Mg(2+) ion per subunit.</text>
</comment>
<comment type="subunit">
    <text evidence="1">Homodimer.</text>
</comment>
<comment type="similarity">
    <text evidence="1">Belongs to the HAM1 NTPase family.</text>
</comment>
<accession>Q8F031</accession>
<keyword id="KW-0378">Hydrolase</keyword>
<keyword id="KW-0460">Magnesium</keyword>
<keyword id="KW-0479">Metal-binding</keyword>
<keyword id="KW-0546">Nucleotide metabolism</keyword>
<keyword id="KW-0547">Nucleotide-binding</keyword>
<keyword id="KW-1185">Reference proteome</keyword>
<feature type="chain" id="PRO_0000178186" description="dITP/XTP pyrophosphatase">
    <location>
        <begin position="1"/>
        <end position="197"/>
    </location>
</feature>
<feature type="active site" description="Proton acceptor" evidence="1">
    <location>
        <position position="71"/>
    </location>
</feature>
<feature type="binding site" evidence="1">
    <location>
        <begin position="9"/>
        <end position="14"/>
    </location>
    <ligand>
        <name>substrate</name>
    </ligand>
</feature>
<feature type="binding site" evidence="1">
    <location>
        <position position="42"/>
    </location>
    <ligand>
        <name>Mg(2+)</name>
        <dbReference type="ChEBI" id="CHEBI:18420"/>
    </ligand>
</feature>
<feature type="binding site" evidence="1">
    <location>
        <position position="71"/>
    </location>
    <ligand>
        <name>Mg(2+)</name>
        <dbReference type="ChEBI" id="CHEBI:18420"/>
    </ligand>
</feature>
<feature type="binding site" evidence="1">
    <location>
        <position position="72"/>
    </location>
    <ligand>
        <name>substrate</name>
    </ligand>
</feature>
<feature type="binding site" evidence="1">
    <location>
        <begin position="153"/>
        <end position="156"/>
    </location>
    <ligand>
        <name>substrate</name>
    </ligand>
</feature>
<feature type="binding site" evidence="1">
    <location>
        <position position="176"/>
    </location>
    <ligand>
        <name>substrate</name>
    </ligand>
</feature>
<feature type="binding site" evidence="1">
    <location>
        <begin position="181"/>
        <end position="182"/>
    </location>
    <ligand>
        <name>substrate</name>
    </ligand>
</feature>
<evidence type="ECO:0000255" key="1">
    <source>
        <dbReference type="HAMAP-Rule" id="MF_01405"/>
    </source>
</evidence>
<organism>
    <name type="scientific">Leptospira interrogans serogroup Icterohaemorrhagiae serovar Lai (strain 56601)</name>
    <dbReference type="NCBI Taxonomy" id="189518"/>
    <lineage>
        <taxon>Bacteria</taxon>
        <taxon>Pseudomonadati</taxon>
        <taxon>Spirochaetota</taxon>
        <taxon>Spirochaetia</taxon>
        <taxon>Leptospirales</taxon>
        <taxon>Leptospiraceae</taxon>
        <taxon>Leptospira</taxon>
    </lineage>
</organism>
<dbReference type="EC" id="3.6.1.66" evidence="1"/>
<dbReference type="EMBL" id="AE010300">
    <property type="protein sequence ID" value="AAN50864.1"/>
    <property type="molecule type" value="Genomic_DNA"/>
</dbReference>
<dbReference type="RefSeq" id="NP_713846.1">
    <property type="nucleotide sequence ID" value="NC_004342.2"/>
</dbReference>
<dbReference type="SMR" id="Q8F031"/>
<dbReference type="FunCoup" id="Q8F031">
    <property type="interactions" value="469"/>
</dbReference>
<dbReference type="STRING" id="189518.LA_3666"/>
<dbReference type="PaxDb" id="189518-LA_3666"/>
<dbReference type="EnsemblBacteria" id="AAN50864">
    <property type="protein sequence ID" value="AAN50864"/>
    <property type="gene ID" value="LA_3666"/>
</dbReference>
<dbReference type="KEGG" id="lil:LA_3666"/>
<dbReference type="PATRIC" id="fig|189518.3.peg.3644"/>
<dbReference type="HOGENOM" id="CLU_082080_0_2_12"/>
<dbReference type="InParanoid" id="Q8F031"/>
<dbReference type="OrthoDB" id="9807456at2"/>
<dbReference type="Proteomes" id="UP000001408">
    <property type="component" value="Chromosome I"/>
</dbReference>
<dbReference type="GO" id="GO:0005737">
    <property type="term" value="C:cytoplasm"/>
    <property type="evidence" value="ECO:0000318"/>
    <property type="project" value="GO_Central"/>
</dbReference>
<dbReference type="GO" id="GO:0005829">
    <property type="term" value="C:cytosol"/>
    <property type="evidence" value="ECO:0000318"/>
    <property type="project" value="GO_Central"/>
</dbReference>
<dbReference type="GO" id="GO:0035870">
    <property type="term" value="F:dITP diphosphatase activity"/>
    <property type="evidence" value="ECO:0007669"/>
    <property type="project" value="RHEA"/>
</dbReference>
<dbReference type="GO" id="GO:0036220">
    <property type="term" value="F:ITP diphosphatase activity"/>
    <property type="evidence" value="ECO:0007669"/>
    <property type="project" value="UniProtKB-EC"/>
</dbReference>
<dbReference type="GO" id="GO:0046872">
    <property type="term" value="F:metal ion binding"/>
    <property type="evidence" value="ECO:0007669"/>
    <property type="project" value="UniProtKB-KW"/>
</dbReference>
<dbReference type="GO" id="GO:0047429">
    <property type="term" value="F:nucleoside triphosphate diphosphatase activity"/>
    <property type="evidence" value="ECO:0000318"/>
    <property type="project" value="GO_Central"/>
</dbReference>
<dbReference type="GO" id="GO:0000166">
    <property type="term" value="F:nucleotide binding"/>
    <property type="evidence" value="ECO:0007669"/>
    <property type="project" value="UniProtKB-KW"/>
</dbReference>
<dbReference type="GO" id="GO:0017111">
    <property type="term" value="F:ribonucleoside triphosphate phosphatase activity"/>
    <property type="evidence" value="ECO:0007669"/>
    <property type="project" value="InterPro"/>
</dbReference>
<dbReference type="GO" id="GO:0036222">
    <property type="term" value="F:XTP diphosphatase activity"/>
    <property type="evidence" value="ECO:0007669"/>
    <property type="project" value="RHEA"/>
</dbReference>
<dbReference type="GO" id="GO:0009143">
    <property type="term" value="P:nucleoside triphosphate catabolic process"/>
    <property type="evidence" value="ECO:0000318"/>
    <property type="project" value="GO_Central"/>
</dbReference>
<dbReference type="GO" id="GO:0009117">
    <property type="term" value="P:nucleotide metabolic process"/>
    <property type="evidence" value="ECO:0007669"/>
    <property type="project" value="UniProtKB-KW"/>
</dbReference>
<dbReference type="GO" id="GO:0009146">
    <property type="term" value="P:purine nucleoside triphosphate catabolic process"/>
    <property type="evidence" value="ECO:0007669"/>
    <property type="project" value="UniProtKB-UniRule"/>
</dbReference>
<dbReference type="CDD" id="cd00515">
    <property type="entry name" value="HAM1"/>
    <property type="match status" value="1"/>
</dbReference>
<dbReference type="FunFam" id="3.90.950.10:FF:000001">
    <property type="entry name" value="dITP/XTP pyrophosphatase"/>
    <property type="match status" value="1"/>
</dbReference>
<dbReference type="Gene3D" id="3.90.950.10">
    <property type="match status" value="1"/>
</dbReference>
<dbReference type="HAMAP" id="MF_01405">
    <property type="entry name" value="Non_canon_purine_NTPase"/>
    <property type="match status" value="1"/>
</dbReference>
<dbReference type="InterPro" id="IPR020922">
    <property type="entry name" value="dITP/XTP_pyrophosphatase"/>
</dbReference>
<dbReference type="InterPro" id="IPR029001">
    <property type="entry name" value="ITPase-like_fam"/>
</dbReference>
<dbReference type="InterPro" id="IPR002637">
    <property type="entry name" value="RdgB/HAM1"/>
</dbReference>
<dbReference type="NCBIfam" id="TIGR00042">
    <property type="entry name" value="RdgB/HAM1 family non-canonical purine NTP pyrophosphatase"/>
    <property type="match status" value="1"/>
</dbReference>
<dbReference type="PANTHER" id="PTHR11067:SF9">
    <property type="entry name" value="INOSINE TRIPHOSPHATE PYROPHOSPHATASE"/>
    <property type="match status" value="1"/>
</dbReference>
<dbReference type="PANTHER" id="PTHR11067">
    <property type="entry name" value="INOSINE TRIPHOSPHATE PYROPHOSPHATASE/HAM1 PROTEIN"/>
    <property type="match status" value="1"/>
</dbReference>
<dbReference type="Pfam" id="PF01725">
    <property type="entry name" value="Ham1p_like"/>
    <property type="match status" value="1"/>
</dbReference>
<dbReference type="SUPFAM" id="SSF52972">
    <property type="entry name" value="ITPase-like"/>
    <property type="match status" value="1"/>
</dbReference>